<feature type="chain" id="PRO_0000218923" description="Cancer/testis antigen 2">
    <location>
        <begin position="1"/>
        <end position="210"/>
    </location>
</feature>
<feature type="region of interest" description="Disordered" evidence="1">
    <location>
        <begin position="1"/>
        <end position="80"/>
    </location>
</feature>
<feature type="region of interest" description="Disordered" evidence="1">
    <location>
        <begin position="154"/>
        <end position="197"/>
    </location>
</feature>
<feature type="compositionally biased region" description="Gly residues" evidence="1">
    <location>
        <begin position="1"/>
        <end position="47"/>
    </location>
</feature>
<feature type="compositionally biased region" description="Gly residues" evidence="1">
    <location>
        <begin position="56"/>
        <end position="66"/>
    </location>
</feature>
<feature type="compositionally biased region" description="Basic and acidic residues" evidence="1">
    <location>
        <begin position="163"/>
        <end position="177"/>
    </location>
</feature>
<feature type="splice variant" id="VSP_004301" description="In isoform LAGE-1A." evidence="6 7 8 9">
    <original>MSVRDQDREGAGRMRVVGWGLGSASPEGQKARDLRTPKHKVSEQRPGTPGPPPPEGAQGDGCRGVAFNVMFSAPHI</original>
    <variation>IRLTAADHRQLQLSISSCLQQLSLLMWITQCFLPVFLAQAPSGQRR</variation>
    <location>
        <begin position="135"/>
        <end position="210"/>
    </location>
</feature>
<feature type="sequence variant" id="VAR_007855" description="In dbSNP:rs17855367." evidence="2 3 5">
    <original>R</original>
    <variation>Q</variation>
    <location>
        <position position="6"/>
    </location>
</feature>
<feature type="sequence variant" id="VAR_007856" description="In dbSNP:rs17328091." evidence="2 3 5">
    <original>E</original>
    <variation>Q</variation>
    <location>
        <position position="89"/>
    </location>
</feature>
<feature type="sequence variant" id="VAR_057512" description="In dbSNP:rs5987003.">
    <original>P</original>
    <variation>A</variation>
    <location>
        <position position="99"/>
    </location>
</feature>
<feature type="sequence conflict" description="In Ref. 1; CAA11117." evidence="10" ref="1">
    <original>R</original>
    <variation>W</variation>
    <location>
        <position position="138"/>
    </location>
</feature>
<organism>
    <name type="scientific">Homo sapiens</name>
    <name type="common">Human</name>
    <dbReference type="NCBI Taxonomy" id="9606"/>
    <lineage>
        <taxon>Eukaryota</taxon>
        <taxon>Metazoa</taxon>
        <taxon>Chordata</taxon>
        <taxon>Craniata</taxon>
        <taxon>Vertebrata</taxon>
        <taxon>Euteleostomi</taxon>
        <taxon>Mammalia</taxon>
        <taxon>Eutheria</taxon>
        <taxon>Euarchontoglires</taxon>
        <taxon>Primates</taxon>
        <taxon>Haplorrhini</taxon>
        <taxon>Catarrhini</taxon>
        <taxon>Hominidae</taxon>
        <taxon>Homo</taxon>
    </lineage>
</organism>
<reference key="1">
    <citation type="journal article" date="1998" name="Int. J. Cancer">
        <title>LAGE-1, a new gene with tumor specificity.</title>
        <authorList>
            <person name="Lethe B.G."/>
            <person name="Lucas S."/>
            <person name="Michaux L."/>
            <person name="De Smet C."/>
            <person name="Godelaine D."/>
            <person name="Serrano A."/>
            <person name="De Plaen E."/>
            <person name="Boon T."/>
        </authorList>
    </citation>
    <scope>NUCLEOTIDE SEQUENCE [GENOMIC DNA / MRNA] (ISOFORMS LAGE-1A AND LAGE-1B)</scope>
    <source>
        <tissue>Melanoma</tissue>
    </source>
</reference>
<reference key="2">
    <citation type="journal article" date="1999" name="Int. J. Cancer">
        <title>Interleukin-2-induced, melanoma-specific T cells recognize CAMEL, an unexpected translation product of LAGE-1.</title>
        <authorList>
            <person name="Aarnoudse C.A."/>
            <person name="Van den Doel P.B."/>
            <person name="Heemskerk B."/>
            <person name="Schrier P.I."/>
        </authorList>
    </citation>
    <scope>NUCLEOTIDE SEQUENCE [MRNA] (ISOFORMS LAGE-1A AND LAGE-1B)</scope>
    <scope>VARIANTS GLN-6 AND GLN-89</scope>
    <source>
        <tissue>Melanoma</tissue>
    </source>
</reference>
<reference key="3">
    <citation type="journal article" date="2001" name="Hum. Mol. Genet.">
        <title>Multiple pathogenic and benign genomic rearrangements occur at a 35 kb duplication involving the NEMO and LAGE2 genes.</title>
        <authorList>
            <person name="Aradhya S."/>
            <person name="Bardaro T."/>
            <person name="Galgoczy P."/>
            <person name="Yamagata T."/>
            <person name="Esposito T."/>
            <person name="Patlan H."/>
            <person name="Ciccodicola A."/>
            <person name="Kenwrick S."/>
            <person name="Platzer M."/>
            <person name="D'Urso M."/>
            <person name="Nelson D.L."/>
        </authorList>
    </citation>
    <scope>NUCLEOTIDE SEQUENCE [GENOMIC DNA]</scope>
    <scope>VARIANTS GLN-6 AND GLN-89</scope>
</reference>
<reference key="4">
    <citation type="journal article" date="2008" name="J. Cancer Res. Clin. Oncol.">
        <title>Identification and expression analysis of novel LAGE-1 alleles with single nucleotide polymorphisms in cancer patients.</title>
        <authorList>
            <person name="Shao Y."/>
            <person name="Sun Z.-Y."/>
            <person name="Sun S.-W."/>
            <person name="Zhao Y."/>
            <person name="Sin W.Y."/>
            <person name="Yuan Y.-H."/>
            <person name="Simpson A.J.G."/>
            <person name="Old L.J."/>
            <person name="Sang X.-T."/>
            <person name="Mao Y.-L."/>
            <person name="Xie Y."/>
            <person name="Huang J.-F."/>
            <person name="Zhao H.-T."/>
        </authorList>
    </citation>
    <scope>NUCLEOTIDE SEQUENCE [MRNA] (ISOFORM LAGE-1A)</scope>
    <scope>POLYMORPHISM</scope>
    <source>
        <tissue>Hepatoma</tissue>
        <tissue>Stomach cancer</tissue>
    </source>
</reference>
<reference key="5">
    <citation type="journal article" date="2005" name="Nature">
        <title>The DNA sequence of the human X chromosome.</title>
        <authorList>
            <person name="Ross M.T."/>
            <person name="Grafham D.V."/>
            <person name="Coffey A.J."/>
            <person name="Scherer S."/>
            <person name="McLay K."/>
            <person name="Muzny D."/>
            <person name="Platzer M."/>
            <person name="Howell G.R."/>
            <person name="Burrows C."/>
            <person name="Bird C.P."/>
            <person name="Frankish A."/>
            <person name="Lovell F.L."/>
            <person name="Howe K.L."/>
            <person name="Ashurst J.L."/>
            <person name="Fulton R.S."/>
            <person name="Sudbrak R."/>
            <person name="Wen G."/>
            <person name="Jones M.C."/>
            <person name="Hurles M.E."/>
            <person name="Andrews T.D."/>
            <person name="Scott C.E."/>
            <person name="Searle S."/>
            <person name="Ramser J."/>
            <person name="Whittaker A."/>
            <person name="Deadman R."/>
            <person name="Carter N.P."/>
            <person name="Hunt S.E."/>
            <person name="Chen R."/>
            <person name="Cree A."/>
            <person name="Gunaratne P."/>
            <person name="Havlak P."/>
            <person name="Hodgson A."/>
            <person name="Metzker M.L."/>
            <person name="Richards S."/>
            <person name="Scott G."/>
            <person name="Steffen D."/>
            <person name="Sodergren E."/>
            <person name="Wheeler D.A."/>
            <person name="Worley K.C."/>
            <person name="Ainscough R."/>
            <person name="Ambrose K.D."/>
            <person name="Ansari-Lari M.A."/>
            <person name="Aradhya S."/>
            <person name="Ashwell R.I."/>
            <person name="Babbage A.K."/>
            <person name="Bagguley C.L."/>
            <person name="Ballabio A."/>
            <person name="Banerjee R."/>
            <person name="Barker G.E."/>
            <person name="Barlow K.F."/>
            <person name="Barrett I.P."/>
            <person name="Bates K.N."/>
            <person name="Beare D.M."/>
            <person name="Beasley H."/>
            <person name="Beasley O."/>
            <person name="Beck A."/>
            <person name="Bethel G."/>
            <person name="Blechschmidt K."/>
            <person name="Brady N."/>
            <person name="Bray-Allen S."/>
            <person name="Bridgeman A.M."/>
            <person name="Brown A.J."/>
            <person name="Brown M.J."/>
            <person name="Bonnin D."/>
            <person name="Bruford E.A."/>
            <person name="Buhay C."/>
            <person name="Burch P."/>
            <person name="Burford D."/>
            <person name="Burgess J."/>
            <person name="Burrill W."/>
            <person name="Burton J."/>
            <person name="Bye J.M."/>
            <person name="Carder C."/>
            <person name="Carrel L."/>
            <person name="Chako J."/>
            <person name="Chapman J.C."/>
            <person name="Chavez D."/>
            <person name="Chen E."/>
            <person name="Chen G."/>
            <person name="Chen Y."/>
            <person name="Chen Z."/>
            <person name="Chinault C."/>
            <person name="Ciccodicola A."/>
            <person name="Clark S.Y."/>
            <person name="Clarke G."/>
            <person name="Clee C.M."/>
            <person name="Clegg S."/>
            <person name="Clerc-Blankenburg K."/>
            <person name="Clifford K."/>
            <person name="Cobley V."/>
            <person name="Cole C.G."/>
            <person name="Conquer J.S."/>
            <person name="Corby N."/>
            <person name="Connor R.E."/>
            <person name="David R."/>
            <person name="Davies J."/>
            <person name="Davis C."/>
            <person name="Davis J."/>
            <person name="Delgado O."/>
            <person name="Deshazo D."/>
            <person name="Dhami P."/>
            <person name="Ding Y."/>
            <person name="Dinh H."/>
            <person name="Dodsworth S."/>
            <person name="Draper H."/>
            <person name="Dugan-Rocha S."/>
            <person name="Dunham A."/>
            <person name="Dunn M."/>
            <person name="Durbin K.J."/>
            <person name="Dutta I."/>
            <person name="Eades T."/>
            <person name="Ellwood M."/>
            <person name="Emery-Cohen A."/>
            <person name="Errington H."/>
            <person name="Evans K.L."/>
            <person name="Faulkner L."/>
            <person name="Francis F."/>
            <person name="Frankland J."/>
            <person name="Fraser A.E."/>
            <person name="Galgoczy P."/>
            <person name="Gilbert J."/>
            <person name="Gill R."/>
            <person name="Gloeckner G."/>
            <person name="Gregory S.G."/>
            <person name="Gribble S."/>
            <person name="Griffiths C."/>
            <person name="Grocock R."/>
            <person name="Gu Y."/>
            <person name="Gwilliam R."/>
            <person name="Hamilton C."/>
            <person name="Hart E.A."/>
            <person name="Hawes A."/>
            <person name="Heath P.D."/>
            <person name="Heitmann K."/>
            <person name="Hennig S."/>
            <person name="Hernandez J."/>
            <person name="Hinzmann B."/>
            <person name="Ho S."/>
            <person name="Hoffs M."/>
            <person name="Howden P.J."/>
            <person name="Huckle E.J."/>
            <person name="Hume J."/>
            <person name="Hunt P.J."/>
            <person name="Hunt A.R."/>
            <person name="Isherwood J."/>
            <person name="Jacob L."/>
            <person name="Johnson D."/>
            <person name="Jones S."/>
            <person name="de Jong P.J."/>
            <person name="Joseph S.S."/>
            <person name="Keenan S."/>
            <person name="Kelly S."/>
            <person name="Kershaw J.K."/>
            <person name="Khan Z."/>
            <person name="Kioschis P."/>
            <person name="Klages S."/>
            <person name="Knights A.J."/>
            <person name="Kosiura A."/>
            <person name="Kovar-Smith C."/>
            <person name="Laird G.K."/>
            <person name="Langford C."/>
            <person name="Lawlor S."/>
            <person name="Leversha M."/>
            <person name="Lewis L."/>
            <person name="Liu W."/>
            <person name="Lloyd C."/>
            <person name="Lloyd D.M."/>
            <person name="Loulseged H."/>
            <person name="Loveland J.E."/>
            <person name="Lovell J.D."/>
            <person name="Lozado R."/>
            <person name="Lu J."/>
            <person name="Lyne R."/>
            <person name="Ma J."/>
            <person name="Maheshwari M."/>
            <person name="Matthews L.H."/>
            <person name="McDowall J."/>
            <person name="McLaren S."/>
            <person name="McMurray A."/>
            <person name="Meidl P."/>
            <person name="Meitinger T."/>
            <person name="Milne S."/>
            <person name="Miner G."/>
            <person name="Mistry S.L."/>
            <person name="Morgan M."/>
            <person name="Morris S."/>
            <person name="Mueller I."/>
            <person name="Mullikin J.C."/>
            <person name="Nguyen N."/>
            <person name="Nordsiek G."/>
            <person name="Nyakatura G."/>
            <person name="O'dell C.N."/>
            <person name="Okwuonu G."/>
            <person name="Palmer S."/>
            <person name="Pandian R."/>
            <person name="Parker D."/>
            <person name="Parrish J."/>
            <person name="Pasternak S."/>
            <person name="Patel D."/>
            <person name="Pearce A.V."/>
            <person name="Pearson D.M."/>
            <person name="Pelan S.E."/>
            <person name="Perez L."/>
            <person name="Porter K.M."/>
            <person name="Ramsey Y."/>
            <person name="Reichwald K."/>
            <person name="Rhodes S."/>
            <person name="Ridler K.A."/>
            <person name="Schlessinger D."/>
            <person name="Schueler M.G."/>
            <person name="Sehra H.K."/>
            <person name="Shaw-Smith C."/>
            <person name="Shen H."/>
            <person name="Sheridan E.M."/>
            <person name="Shownkeen R."/>
            <person name="Skuce C.D."/>
            <person name="Smith M.L."/>
            <person name="Sotheran E.C."/>
            <person name="Steingruber H.E."/>
            <person name="Steward C.A."/>
            <person name="Storey R."/>
            <person name="Swann R.M."/>
            <person name="Swarbreck D."/>
            <person name="Tabor P.E."/>
            <person name="Taudien S."/>
            <person name="Taylor T."/>
            <person name="Teague B."/>
            <person name="Thomas K."/>
            <person name="Thorpe A."/>
            <person name="Timms K."/>
            <person name="Tracey A."/>
            <person name="Trevanion S."/>
            <person name="Tromans A.C."/>
            <person name="d'Urso M."/>
            <person name="Verduzco D."/>
            <person name="Villasana D."/>
            <person name="Waldron L."/>
            <person name="Wall M."/>
            <person name="Wang Q."/>
            <person name="Warren J."/>
            <person name="Warry G.L."/>
            <person name="Wei X."/>
            <person name="West A."/>
            <person name="Whitehead S.L."/>
            <person name="Whiteley M.N."/>
            <person name="Wilkinson J.E."/>
            <person name="Willey D.L."/>
            <person name="Williams G."/>
            <person name="Williams L."/>
            <person name="Williamson A."/>
            <person name="Williamson H."/>
            <person name="Wilming L."/>
            <person name="Woodmansey R.L."/>
            <person name="Wray P.W."/>
            <person name="Yen J."/>
            <person name="Zhang J."/>
            <person name="Zhou J."/>
            <person name="Zoghbi H."/>
            <person name="Zorilla S."/>
            <person name="Buck D."/>
            <person name="Reinhardt R."/>
            <person name="Poustka A."/>
            <person name="Rosenthal A."/>
            <person name="Lehrach H."/>
            <person name="Meindl A."/>
            <person name="Minx P.J."/>
            <person name="Hillier L.W."/>
            <person name="Willard H.F."/>
            <person name="Wilson R.K."/>
            <person name="Waterston R.H."/>
            <person name="Rice C.M."/>
            <person name="Vaudin M."/>
            <person name="Coulson A."/>
            <person name="Nelson D.L."/>
            <person name="Weinstock G."/>
            <person name="Sulston J.E."/>
            <person name="Durbin R.M."/>
            <person name="Hubbard T."/>
            <person name="Gibbs R.A."/>
            <person name="Beck S."/>
            <person name="Rogers J."/>
            <person name="Bentley D.R."/>
        </authorList>
    </citation>
    <scope>NUCLEOTIDE SEQUENCE [LARGE SCALE GENOMIC DNA]</scope>
    <scope>VARIANTS GLN-6 AND GLN-89</scope>
</reference>
<reference key="6">
    <citation type="journal article" date="2004" name="Genome Res.">
        <title>The status, quality, and expansion of the NIH full-length cDNA project: the Mammalian Gene Collection (MGC).</title>
        <authorList>
            <consortium name="The MGC Project Team"/>
        </authorList>
    </citation>
    <scope>NUCLEOTIDE SEQUENCE [LARGE SCALE MRNA] (ISOFORMS LAGE-1A AND LAGE-1B)</scope>
    <source>
        <tissue>Placenta</tissue>
    </source>
</reference>
<reference key="7">
    <citation type="journal article" date="2010" name="Sci. Signal.">
        <title>Quantitative phosphoproteomics reveals widespread full phosphorylation site occupancy during mitosis.</title>
        <authorList>
            <person name="Olsen J.V."/>
            <person name="Vermeulen M."/>
            <person name="Santamaria A."/>
            <person name="Kumar C."/>
            <person name="Miller M.L."/>
            <person name="Jensen L.J."/>
            <person name="Gnad F."/>
            <person name="Cox J."/>
            <person name="Jensen T.S."/>
            <person name="Nigg E.A."/>
            <person name="Brunak S."/>
            <person name="Mann M."/>
        </authorList>
    </citation>
    <scope>IDENTIFICATION BY MASS SPECTROMETRY [LARGE SCALE ANALYSIS]</scope>
    <source>
        <tissue>Cervix carcinoma</tissue>
    </source>
</reference>
<proteinExistence type="evidence at protein level"/>
<sequence length="210" mass="21090">MQAEGRGTGGSTGDADGPGGPGIPDGPGGNAGGPGEAGATGGRGPRGAGAARASGPRGGAPRGPHGGAASAQDGRCPCGARRPDSRLLELHITMPFSSPMEAELVRRILSRDAAPLPRPGAVLKDFTVSGNLLFMSVRDQDREGAGRMRVVGWGLGSASPEGQKARDLRTPKHKVSEQRPGTPGPPPPEGAQGDGCRGVAFNVMFSAPHI</sequence>
<keyword id="KW-0025">Alternative splicing</keyword>
<keyword id="KW-1267">Proteomics identification</keyword>
<keyword id="KW-1185">Reference proteome</keyword>
<accession>O75638</accession>
<accession>O75637</accession>
<accession>Q0VIL6</accession>
<accession>Q14CD6</accession>
<accession>Q2Z1N4</accession>
<accession>Q9BU80</accession>
<accession>Q9UJ89</accession>
<accession>Q9Y479</accession>
<evidence type="ECO:0000256" key="1">
    <source>
        <dbReference type="SAM" id="MobiDB-lite"/>
    </source>
</evidence>
<evidence type="ECO:0000269" key="2">
    <source>
    </source>
</evidence>
<evidence type="ECO:0000269" key="3">
    <source>
    </source>
</evidence>
<evidence type="ECO:0000269" key="4">
    <source>
    </source>
</evidence>
<evidence type="ECO:0000269" key="5">
    <source>
    </source>
</evidence>
<evidence type="ECO:0000303" key="6">
    <source>
    </source>
</evidence>
<evidence type="ECO:0000303" key="7">
    <source>
    </source>
</evidence>
<evidence type="ECO:0000303" key="8">
    <source>
    </source>
</evidence>
<evidence type="ECO:0000303" key="9">
    <source>
    </source>
</evidence>
<evidence type="ECO:0000305" key="10"/>
<comment type="interaction">
    <interactant intactId="EBI-10188927">
        <id>O75638</id>
    </interactant>
    <interactant intactId="EBI-742327">
        <id>Q15654</id>
        <label>TRIP6</label>
    </interactant>
    <organismsDiffer>false</organismsDiffer>
    <experiments>4</experiments>
</comment>
<comment type="interaction">
    <interactant intactId="EBI-10188927">
        <id>O75638</id>
    </interactant>
    <interactant intactId="EBI-10173939">
        <id>Q9UMX0-2</id>
        <label>UBQLN1</label>
    </interactant>
    <organismsDiffer>false</organismsDiffer>
    <experiments>3</experiments>
</comment>
<comment type="interaction">
    <interactant intactId="EBI-12265122">
        <id>O75638-2</id>
    </interactant>
    <interactant intactId="EBI-4400025">
        <id>Q9Y2T1</id>
        <label>AXIN2</label>
    </interactant>
    <organismsDiffer>false</organismsDiffer>
    <experiments>3</experiments>
</comment>
<comment type="interaction">
    <interactant intactId="EBI-12265122">
        <id>O75638-2</id>
    </interactant>
    <interactant intactId="EBI-2806959">
        <id>Q6ICB0</id>
        <label>DESI1</label>
    </interactant>
    <organismsDiffer>false</organismsDiffer>
    <experiments>6</experiments>
</comment>
<comment type="interaction">
    <interactant intactId="EBI-12265122">
        <id>O75638-2</id>
    </interactant>
    <interactant intactId="EBI-740446">
        <id>P32242</id>
        <label>OTX1</label>
    </interactant>
    <organismsDiffer>false</organismsDiffer>
    <experiments>3</experiments>
</comment>
<comment type="interaction">
    <interactant intactId="EBI-12265122">
        <id>O75638-2</id>
    </interactant>
    <interactant intactId="EBI-1383852">
        <id>P54646</id>
        <label>PRKAA2</label>
    </interactant>
    <organismsDiffer>false</organismsDiffer>
    <experiments>3</experiments>
</comment>
<comment type="interaction">
    <interactant intactId="EBI-12265122">
        <id>O75638-2</id>
    </interactant>
    <interactant intactId="EBI-750494">
        <id>P49901</id>
        <label>SMCP</label>
    </interactant>
    <organismsDiffer>false</organismsDiffer>
    <experiments>3</experiments>
</comment>
<comment type="interaction">
    <interactant intactId="EBI-12265122">
        <id>O75638-2</id>
    </interactant>
    <interactant intactId="EBI-2559818">
        <id>Q8NCE0</id>
        <label>TSEN2</label>
    </interactant>
    <organismsDiffer>false</organismsDiffer>
    <experiments>3</experiments>
</comment>
<comment type="interaction">
    <interactant intactId="EBI-12265122">
        <id>O75638-2</id>
    </interactant>
    <interactant intactId="EBI-741480">
        <id>Q9UMX0</id>
        <label>UBQLN1</label>
    </interactant>
    <organismsDiffer>false</organismsDiffer>
    <experiments>3</experiments>
</comment>
<comment type="alternative products">
    <event type="alternative splicing"/>
    <isoform>
        <id>O75638-1</id>
        <name>LAGE-1B</name>
        <name>LAGE-1L</name>
        <sequence type="displayed"/>
    </isoform>
    <isoform>
        <id>O75638-2</id>
        <name>LAGE-1A</name>
        <name>LAGE-1S</name>
        <sequence type="described" ref="VSP_004301"/>
    </isoform>
</comment>
<comment type="tissue specificity">
    <text>Testis and very low level in placenta and in some uterus samples. Observed in 25-50% of tumor samples of melanomas, non-small-cell lung carcinomas, bladder, prostate and head and neck cancers.</text>
</comment>
<comment type="polymorphism">
    <text evidence="4">At least three different alleles exist. The allele defined by Arg-6 and Glu-89 is associated with a risk of gastric cancer.</text>
</comment>
<comment type="similarity">
    <text evidence="10">Belongs to the CTAG/PCC1 family.</text>
</comment>
<protein>
    <recommendedName>
        <fullName>Cancer/testis antigen 2</fullName>
        <shortName>CT2</shortName>
    </recommendedName>
    <alternativeName>
        <fullName>Autoimmunogenic cancer/testis antigen NY-ESO-2</fullName>
    </alternativeName>
    <alternativeName>
        <fullName>Cancer/testis antigen 6.2</fullName>
        <shortName>CT6.2</shortName>
    </alternativeName>
    <alternativeName>
        <fullName>L antigen family member 1</fullName>
        <shortName>LAGE-1</shortName>
    </alternativeName>
</protein>
<dbReference type="EMBL" id="AJ223093">
    <property type="protein sequence ID" value="CAA11117.1"/>
    <property type="molecule type" value="Genomic_DNA"/>
</dbReference>
<dbReference type="EMBL" id="AJ223093">
    <property type="protein sequence ID" value="CAA11116.1"/>
    <property type="molecule type" value="Genomic_DNA"/>
</dbReference>
<dbReference type="EMBL" id="AJ223040">
    <property type="protein sequence ID" value="CAA11043.1"/>
    <property type="molecule type" value="mRNA"/>
</dbReference>
<dbReference type="EMBL" id="AJ223041">
    <property type="protein sequence ID" value="CAA11044.1"/>
    <property type="molecule type" value="mRNA"/>
</dbReference>
<dbReference type="EMBL" id="AJ012834">
    <property type="protein sequence ID" value="CAA10194.1"/>
    <property type="molecule type" value="mRNA"/>
</dbReference>
<dbReference type="EMBL" id="AJ012835">
    <property type="protein sequence ID" value="CAA10196.1"/>
    <property type="molecule type" value="mRNA"/>
</dbReference>
<dbReference type="EMBL" id="AY679088">
    <property type="protein sequence ID" value="AAV98584.1"/>
    <property type="molecule type" value="mRNA"/>
</dbReference>
<dbReference type="EMBL" id="AY679089">
    <property type="protein sequence ID" value="AAV98585.1"/>
    <property type="molecule type" value="mRNA"/>
</dbReference>
<dbReference type="EMBL" id="AC244107">
    <property type="status" value="NOT_ANNOTATED_CDS"/>
    <property type="molecule type" value="Genomic_DNA"/>
</dbReference>
<dbReference type="EMBL" id="AF277315">
    <property type="protein sequence ID" value="AAL27015.1"/>
    <property type="molecule type" value="Genomic_DNA"/>
</dbReference>
<dbReference type="EMBL" id="BC002833">
    <property type="protein sequence ID" value="AAH02833.1"/>
    <property type="molecule type" value="mRNA"/>
</dbReference>
<dbReference type="EMBL" id="BC113998">
    <property type="protein sequence ID" value="AAI13999.1"/>
    <property type="molecule type" value="mRNA"/>
</dbReference>
<dbReference type="EMBL" id="BC128045">
    <property type="protein sequence ID" value="AAI28046.1"/>
    <property type="molecule type" value="mRNA"/>
</dbReference>
<dbReference type="CCDS" id="CCDS14759.1">
    <molecule id="O75638-1"/>
</dbReference>
<dbReference type="CCDS" id="CCDS35455.1">
    <molecule id="O75638-2"/>
</dbReference>
<dbReference type="RefSeq" id="NP_066274.2">
    <molecule id="O75638-1"/>
    <property type="nucleotide sequence ID" value="NM_020994.5"/>
</dbReference>
<dbReference type="RefSeq" id="NP_758965.2">
    <molecule id="O75638-2"/>
    <property type="nucleotide sequence ID" value="NM_172377.5"/>
</dbReference>
<dbReference type="SMR" id="O75638"/>
<dbReference type="BioGRID" id="119058">
    <property type="interactions" value="35"/>
</dbReference>
<dbReference type="FunCoup" id="O75638">
    <property type="interactions" value="49"/>
</dbReference>
<dbReference type="IntAct" id="O75638">
    <property type="interactions" value="33"/>
</dbReference>
<dbReference type="STRING" id="9606.ENSP00000247306"/>
<dbReference type="iPTMnet" id="O75638"/>
<dbReference type="PhosphoSitePlus" id="O75638"/>
<dbReference type="BioMuta" id="CTAG2"/>
<dbReference type="jPOST" id="O75638"/>
<dbReference type="MassIVE" id="O75638"/>
<dbReference type="PaxDb" id="9606-ENSP00000247306"/>
<dbReference type="PeptideAtlas" id="O75638"/>
<dbReference type="ProteomicsDB" id="50134">
    <molecule id="O75638-1"/>
</dbReference>
<dbReference type="ProteomicsDB" id="50135">
    <molecule id="O75638-2"/>
</dbReference>
<dbReference type="Antibodypedia" id="31343">
    <property type="antibodies" value="139 antibodies from 23 providers"/>
</dbReference>
<dbReference type="DNASU" id="30848"/>
<dbReference type="Ensembl" id="ENST00000247306.4">
    <molecule id="O75638-1"/>
    <property type="protein sequence ID" value="ENSP00000247306.4"/>
    <property type="gene ID" value="ENSG00000126890.14"/>
</dbReference>
<dbReference type="Ensembl" id="ENST00000369585.4">
    <molecule id="O75638-2"/>
    <property type="protein sequence ID" value="ENSP00000358598.3"/>
    <property type="gene ID" value="ENSG00000126890.14"/>
</dbReference>
<dbReference type="GeneID" id="30848"/>
<dbReference type="KEGG" id="hsa:30848"/>
<dbReference type="MANE-Select" id="ENST00000369585.4">
    <molecule id="O75638-2"/>
    <property type="protein sequence ID" value="ENSP00000358598.3"/>
    <property type="RefSeq nucleotide sequence ID" value="NM_172377.5"/>
    <property type="RefSeq protein sequence ID" value="NP_758965.2"/>
</dbReference>
<dbReference type="UCSC" id="uc004fmh.3">
    <molecule id="O75638-1"/>
    <property type="organism name" value="human"/>
</dbReference>
<dbReference type="AGR" id="HGNC:2492"/>
<dbReference type="CTD" id="30848"/>
<dbReference type="DisGeNET" id="30848"/>
<dbReference type="GeneCards" id="CTAG2"/>
<dbReference type="HGNC" id="HGNC:2492">
    <property type="gene designation" value="CTAG2"/>
</dbReference>
<dbReference type="HPA" id="ENSG00000126890">
    <property type="expression patterns" value="Tissue enhanced (heart muscle, testis)"/>
</dbReference>
<dbReference type="MIM" id="300396">
    <property type="type" value="gene"/>
</dbReference>
<dbReference type="neXtProt" id="NX_O75638"/>
<dbReference type="OpenTargets" id="ENSG00000126890"/>
<dbReference type="PharmGKB" id="PA26994"/>
<dbReference type="VEuPathDB" id="HostDB:ENSG00000126890"/>
<dbReference type="eggNOG" id="ENOG502TM3F">
    <property type="taxonomic scope" value="Eukaryota"/>
</dbReference>
<dbReference type="GeneTree" id="ENSGT00410000025802"/>
<dbReference type="HOGENOM" id="CLU_113770_0_0_1"/>
<dbReference type="InParanoid" id="O75638"/>
<dbReference type="OMA" id="QRSIAFC"/>
<dbReference type="OrthoDB" id="9838480at2759"/>
<dbReference type="PAN-GO" id="O75638">
    <property type="GO annotations" value="1 GO annotation based on evolutionary models"/>
</dbReference>
<dbReference type="PhylomeDB" id="O75638"/>
<dbReference type="TreeFam" id="TF337064"/>
<dbReference type="PathwayCommons" id="O75638"/>
<dbReference type="SignaLink" id="O75638"/>
<dbReference type="BioGRID-ORCS" id="30848">
    <property type="hits" value="12 hits in 768 CRISPR screens"/>
</dbReference>
<dbReference type="ChiTaRS" id="CTAG2">
    <property type="organism name" value="human"/>
</dbReference>
<dbReference type="GenomeRNAi" id="30848"/>
<dbReference type="Pharos" id="O75638">
    <property type="development level" value="Tbio"/>
</dbReference>
<dbReference type="PRO" id="PR:O75638"/>
<dbReference type="Proteomes" id="UP000005640">
    <property type="component" value="Chromosome X"/>
</dbReference>
<dbReference type="RNAct" id="O75638">
    <property type="molecule type" value="protein"/>
</dbReference>
<dbReference type="Bgee" id="ENSG00000126890">
    <property type="expression patterns" value="Expressed in primordial germ cell in gonad and 115 other cell types or tissues"/>
</dbReference>
<dbReference type="GO" id="GO:0005813">
    <property type="term" value="C:centrosome"/>
    <property type="evidence" value="ECO:0000314"/>
    <property type="project" value="LIFEdb"/>
</dbReference>
<dbReference type="GO" id="GO:0070525">
    <property type="term" value="P:tRNA threonylcarbamoyladenosine metabolic process"/>
    <property type="evidence" value="ECO:0000318"/>
    <property type="project" value="GO_Central"/>
</dbReference>
<dbReference type="Gene3D" id="3.30.310.50">
    <property type="entry name" value="Alpha-D-phosphohexomutase, C-terminal domain"/>
    <property type="match status" value="1"/>
</dbReference>
<dbReference type="InterPro" id="IPR015419">
    <property type="entry name" value="CTAG/Pcc1"/>
</dbReference>
<dbReference type="Pfam" id="PF09341">
    <property type="entry name" value="Pcc1"/>
    <property type="match status" value="1"/>
</dbReference>
<name>CTAG2_HUMAN</name>
<gene>
    <name type="primary">CTAG2</name>
    <name type="synonym">ESO2</name>
    <name type="synonym">LAGE1</name>
</gene>